<keyword id="KW-0963">Cytoplasm</keyword>
<keyword id="KW-0227">DNA damage</keyword>
<keyword id="KW-0234">DNA repair</keyword>
<keyword id="KW-0378">Hydrolase</keyword>
<accession>Q57L54</accession>
<gene>
    <name evidence="1" type="primary">ung</name>
    <name type="ordered locus">SCH_2652</name>
</gene>
<organism>
    <name type="scientific">Salmonella choleraesuis (strain SC-B67)</name>
    <dbReference type="NCBI Taxonomy" id="321314"/>
    <lineage>
        <taxon>Bacteria</taxon>
        <taxon>Pseudomonadati</taxon>
        <taxon>Pseudomonadota</taxon>
        <taxon>Gammaproteobacteria</taxon>
        <taxon>Enterobacterales</taxon>
        <taxon>Enterobacteriaceae</taxon>
        <taxon>Salmonella</taxon>
    </lineage>
</organism>
<reference key="1">
    <citation type="journal article" date="2005" name="Nucleic Acids Res.">
        <title>The genome sequence of Salmonella enterica serovar Choleraesuis, a highly invasive and resistant zoonotic pathogen.</title>
        <authorList>
            <person name="Chiu C.-H."/>
            <person name="Tang P."/>
            <person name="Chu C."/>
            <person name="Hu S."/>
            <person name="Bao Q."/>
            <person name="Yu J."/>
            <person name="Chou Y.-Y."/>
            <person name="Wang H.-S."/>
            <person name="Lee Y.-S."/>
        </authorList>
    </citation>
    <scope>NUCLEOTIDE SEQUENCE [LARGE SCALE GENOMIC DNA]</scope>
    <source>
        <strain>SC-B67</strain>
    </source>
</reference>
<name>UNG_SALCH</name>
<sequence>MATELTWHDVLADEKQQPYFINTLHTVAGERQSGITVYPPQKDVFNAFRFTELGDVKVVILGQDPYHGPGQAHGLAFSVRPGIAPPPSLVNMYKELEASIPGFVRPAHGYLESWARQGVLLLNTVLTVRAGQAHSHASLGWETFTDKVISLINQHREGVVFLLWGSHAQKKGAIIDPQRHHILKAPHPSPLSAHRGFFGCNHFALTNQWLEQHGEKTIDWTPVLPAESE</sequence>
<comment type="function">
    <text evidence="1">Excises uracil residues from the DNA which can arise as a result of misincorporation of dUMP residues by DNA polymerase or due to deamination of cytosine.</text>
</comment>
<comment type="catalytic activity">
    <reaction evidence="1">
        <text>Hydrolyzes single-stranded DNA or mismatched double-stranded DNA and polynucleotides, releasing free uracil.</text>
        <dbReference type="EC" id="3.2.2.27"/>
    </reaction>
</comment>
<comment type="subcellular location">
    <subcellularLocation>
        <location evidence="1">Cytoplasm</location>
    </subcellularLocation>
</comment>
<comment type="similarity">
    <text evidence="1">Belongs to the uracil-DNA glycosylase (UDG) superfamily. UNG family.</text>
</comment>
<protein>
    <recommendedName>
        <fullName evidence="1">Uracil-DNA glycosylase</fullName>
        <shortName evidence="1">UDG</shortName>
        <ecNumber evidence="1">3.2.2.27</ecNumber>
    </recommendedName>
</protein>
<proteinExistence type="inferred from homology"/>
<dbReference type="EC" id="3.2.2.27" evidence="1"/>
<dbReference type="EMBL" id="AE017220">
    <property type="protein sequence ID" value="AAX66558.1"/>
    <property type="molecule type" value="Genomic_DNA"/>
</dbReference>
<dbReference type="RefSeq" id="WP_000179978.1">
    <property type="nucleotide sequence ID" value="NC_006905.1"/>
</dbReference>
<dbReference type="SMR" id="Q57L54"/>
<dbReference type="KEGG" id="sec:SCH_2652"/>
<dbReference type="HOGENOM" id="CLU_032162_3_0_6"/>
<dbReference type="Proteomes" id="UP000000538">
    <property type="component" value="Chromosome"/>
</dbReference>
<dbReference type="GO" id="GO:0005737">
    <property type="term" value="C:cytoplasm"/>
    <property type="evidence" value="ECO:0007669"/>
    <property type="project" value="UniProtKB-SubCell"/>
</dbReference>
<dbReference type="GO" id="GO:0004844">
    <property type="term" value="F:uracil DNA N-glycosylase activity"/>
    <property type="evidence" value="ECO:0007669"/>
    <property type="project" value="UniProtKB-UniRule"/>
</dbReference>
<dbReference type="GO" id="GO:0097510">
    <property type="term" value="P:base-excision repair, AP site formation via deaminated base removal"/>
    <property type="evidence" value="ECO:0007669"/>
    <property type="project" value="TreeGrafter"/>
</dbReference>
<dbReference type="CDD" id="cd10027">
    <property type="entry name" value="UDG-F1-like"/>
    <property type="match status" value="1"/>
</dbReference>
<dbReference type="FunFam" id="3.40.470.10:FF:000001">
    <property type="entry name" value="Uracil-DNA glycosylase"/>
    <property type="match status" value="1"/>
</dbReference>
<dbReference type="Gene3D" id="3.40.470.10">
    <property type="entry name" value="Uracil-DNA glycosylase-like domain"/>
    <property type="match status" value="1"/>
</dbReference>
<dbReference type="HAMAP" id="MF_00148">
    <property type="entry name" value="UDG"/>
    <property type="match status" value="1"/>
</dbReference>
<dbReference type="InterPro" id="IPR002043">
    <property type="entry name" value="UDG_fam1"/>
</dbReference>
<dbReference type="InterPro" id="IPR018085">
    <property type="entry name" value="Ura-DNA_Glyclase_AS"/>
</dbReference>
<dbReference type="InterPro" id="IPR005122">
    <property type="entry name" value="Uracil-DNA_glycosylase-like"/>
</dbReference>
<dbReference type="InterPro" id="IPR036895">
    <property type="entry name" value="Uracil-DNA_glycosylase-like_sf"/>
</dbReference>
<dbReference type="NCBIfam" id="NF003588">
    <property type="entry name" value="PRK05254.1-1"/>
    <property type="match status" value="1"/>
</dbReference>
<dbReference type="NCBIfam" id="NF003589">
    <property type="entry name" value="PRK05254.1-2"/>
    <property type="match status" value="1"/>
</dbReference>
<dbReference type="NCBIfam" id="NF003591">
    <property type="entry name" value="PRK05254.1-4"/>
    <property type="match status" value="1"/>
</dbReference>
<dbReference type="NCBIfam" id="NF003592">
    <property type="entry name" value="PRK05254.1-5"/>
    <property type="match status" value="1"/>
</dbReference>
<dbReference type="NCBIfam" id="TIGR00628">
    <property type="entry name" value="ung"/>
    <property type="match status" value="1"/>
</dbReference>
<dbReference type="PANTHER" id="PTHR11264">
    <property type="entry name" value="URACIL-DNA GLYCOSYLASE"/>
    <property type="match status" value="1"/>
</dbReference>
<dbReference type="PANTHER" id="PTHR11264:SF0">
    <property type="entry name" value="URACIL-DNA GLYCOSYLASE"/>
    <property type="match status" value="1"/>
</dbReference>
<dbReference type="Pfam" id="PF03167">
    <property type="entry name" value="UDG"/>
    <property type="match status" value="1"/>
</dbReference>
<dbReference type="SMART" id="SM00986">
    <property type="entry name" value="UDG"/>
    <property type="match status" value="1"/>
</dbReference>
<dbReference type="SMART" id="SM00987">
    <property type="entry name" value="UreE_C"/>
    <property type="match status" value="1"/>
</dbReference>
<dbReference type="SUPFAM" id="SSF52141">
    <property type="entry name" value="Uracil-DNA glycosylase-like"/>
    <property type="match status" value="1"/>
</dbReference>
<dbReference type="PROSITE" id="PS00130">
    <property type="entry name" value="U_DNA_GLYCOSYLASE"/>
    <property type="match status" value="1"/>
</dbReference>
<evidence type="ECO:0000255" key="1">
    <source>
        <dbReference type="HAMAP-Rule" id="MF_00148"/>
    </source>
</evidence>
<feature type="chain" id="PRO_1000009935" description="Uracil-DNA glycosylase">
    <location>
        <begin position="1"/>
        <end position="229"/>
    </location>
</feature>
<feature type="active site" description="Proton acceptor" evidence="1">
    <location>
        <position position="64"/>
    </location>
</feature>